<accession>Q02ML7</accession>
<organism>
    <name type="scientific">Pseudomonas aeruginosa (strain UCBPP-PA14)</name>
    <dbReference type="NCBI Taxonomy" id="208963"/>
    <lineage>
        <taxon>Bacteria</taxon>
        <taxon>Pseudomonadati</taxon>
        <taxon>Pseudomonadota</taxon>
        <taxon>Gammaproteobacteria</taxon>
        <taxon>Pseudomonadales</taxon>
        <taxon>Pseudomonadaceae</taxon>
        <taxon>Pseudomonas</taxon>
    </lineage>
</organism>
<proteinExistence type="evidence at protein level"/>
<name>CAS1_PSEAB</name>
<reference key="1">
    <citation type="journal article" date="2006" name="Genome Biol.">
        <title>Genomic analysis reveals that Pseudomonas aeruginosa virulence is combinatorial.</title>
        <authorList>
            <person name="Lee D.G."/>
            <person name="Urbach J.M."/>
            <person name="Wu G."/>
            <person name="Liberati N.T."/>
            <person name="Feinbaum R.L."/>
            <person name="Miyata S."/>
            <person name="Diggins L.T."/>
            <person name="He J."/>
            <person name="Saucier M."/>
            <person name="Deziel E."/>
            <person name="Friedman L."/>
            <person name="Li L."/>
            <person name="Grills G."/>
            <person name="Montgomery K."/>
            <person name="Kucherlapati R."/>
            <person name="Rahme L.G."/>
            <person name="Ausubel F.M."/>
        </authorList>
    </citation>
    <scope>NUCLEOTIDE SEQUENCE [LARGE SCALE GENOMIC DNA]</scope>
    <source>
        <strain>UCBPP-PA14</strain>
    </source>
</reference>
<reference key="2">
    <citation type="journal article" date="2009" name="Structure">
        <title>Structural basis for DNase activity of a conserved protein implicated in CRISPR-mediated genome defense.</title>
        <authorList>
            <person name="Wiedenheft B."/>
            <person name="Zhou K."/>
            <person name="Jinek M."/>
            <person name="Coyle S.M."/>
            <person name="Ma W."/>
            <person name="Doudna J.A."/>
        </authorList>
    </citation>
    <scope>X-RAY CRYSTALLOGRAPHY (2.17 ANGSTROMS) IN COMPLEX WITH MANGANESE</scope>
    <scope>FUNCTION AS DNA ENDONUCLEASE</scope>
    <scope>COFACTOR</scope>
    <scope>ACTIVITY REGULATION</scope>
    <scope>SUBUNIT</scope>
    <scope>MUTAGENESIS OF GLU-190; ASN-223; HIS-254; ASP-265 AND ASP-268</scope>
    <source>
        <strain>UCBPP-PA14</strain>
    </source>
</reference>
<comment type="function">
    <text evidence="1 2">CRISPR (clustered regularly interspaced short palindromic repeat), is an adaptive immune system that provides protection against mobile genetic elements (viruses, transposable elements and conjugative plasmids). CRISPR clusters contain sequences complementary to antecedent mobile elements and target invading nucleic acids. CRISPR clusters are transcribed and processed into CRISPR RNA (crRNA). Involved in the integration of spacer DNA into the CRISPR cassette (By similarity). Acts as a ss- and dsDNA-specific endonuclease (PubMed:19523907).</text>
</comment>
<comment type="cofactor">
    <cofactor evidence="1 2">
        <name>Mn(2+)</name>
        <dbReference type="ChEBI" id="CHEBI:29035"/>
    </cofactor>
    <cofactor evidence="1 2">
        <name>Mg(2+)</name>
        <dbReference type="ChEBI" id="CHEBI:18420"/>
    </cofactor>
    <text evidence="2">Mn(2+) supports cleavage of ss- and dsDNA, while Mg(2+) only supports digestion of dsDNA in vitro.</text>
</comment>
<comment type="activity regulation">
    <text evidence="2">Inhibited by EDTA.</text>
</comment>
<comment type="subunit">
    <text evidence="3 4">Homodimer (PubMed:19523907). This bacteria does not encode Cas2; Cas1 must interact with a different protein to insert spacers (Probable).</text>
</comment>
<comment type="interaction">
    <interactant intactId="EBI-15788664">
        <id>Q02ML7</id>
    </interactant>
    <interactant intactId="EBI-15788664">
        <id>Q02ML7</id>
        <label>cas1</label>
    </interactant>
    <organismsDiffer>false</organismsDiffer>
    <experiments>2</experiments>
</comment>
<comment type="similarity">
    <text evidence="3">Belongs to the CRISPR-associated endonuclease Cas1 family.</text>
</comment>
<gene>
    <name type="primary">cas1</name>
    <name type="ordered locus">PA14_33350</name>
</gene>
<dbReference type="EC" id="3.1.-.-"/>
<dbReference type="EMBL" id="CP000438">
    <property type="protein sequence ID" value="ABJ11600.1"/>
    <property type="molecule type" value="Genomic_DNA"/>
</dbReference>
<dbReference type="PDB" id="3GOD">
    <property type="method" value="X-ray"/>
    <property type="resolution" value="2.17 A"/>
    <property type="chains" value="A/B/C/D=1-324"/>
</dbReference>
<dbReference type="PDB" id="8FLJ">
    <property type="method" value="EM"/>
    <property type="resolution" value="3.48 A"/>
    <property type="chains" value="A/B/C/D=1-324"/>
</dbReference>
<dbReference type="PDBsum" id="3GOD"/>
<dbReference type="PDBsum" id="8FLJ"/>
<dbReference type="EMDB" id="EMD-29280"/>
<dbReference type="SMR" id="Q02ML7"/>
<dbReference type="DIP" id="DIP-48307N"/>
<dbReference type="KEGG" id="pau:PA14_33350"/>
<dbReference type="PseudoCAP" id="PA14_33350"/>
<dbReference type="HOGENOM" id="CLU_074119_0_0_6"/>
<dbReference type="BioCyc" id="PAER208963:G1G74-2807-MONOMER"/>
<dbReference type="EvolutionaryTrace" id="Q02ML7"/>
<dbReference type="Proteomes" id="UP000000653">
    <property type="component" value="Chromosome"/>
</dbReference>
<dbReference type="GO" id="GO:0003677">
    <property type="term" value="F:DNA binding"/>
    <property type="evidence" value="ECO:0007669"/>
    <property type="project" value="UniProtKB-KW"/>
</dbReference>
<dbReference type="GO" id="GO:0004520">
    <property type="term" value="F:DNA endonuclease activity"/>
    <property type="evidence" value="ECO:0007669"/>
    <property type="project" value="InterPro"/>
</dbReference>
<dbReference type="GO" id="GO:0042802">
    <property type="term" value="F:identical protein binding"/>
    <property type="evidence" value="ECO:0000353"/>
    <property type="project" value="IntAct"/>
</dbReference>
<dbReference type="GO" id="GO:0046872">
    <property type="term" value="F:metal ion binding"/>
    <property type="evidence" value="ECO:0007669"/>
    <property type="project" value="UniProtKB-UniRule"/>
</dbReference>
<dbReference type="GO" id="GO:0051607">
    <property type="term" value="P:defense response to virus"/>
    <property type="evidence" value="ECO:0007669"/>
    <property type="project" value="UniProtKB-UniRule"/>
</dbReference>
<dbReference type="GO" id="GO:0043571">
    <property type="term" value="P:maintenance of CRISPR repeat elements"/>
    <property type="evidence" value="ECO:0007669"/>
    <property type="project" value="UniProtKB-UniRule"/>
</dbReference>
<dbReference type="CDD" id="cd09718">
    <property type="entry name" value="Cas1_I-F"/>
    <property type="match status" value="1"/>
</dbReference>
<dbReference type="FunFam" id="3.100.10.20:FF:000002">
    <property type="entry name" value="CRISPR-associated endonuclease Cas1"/>
    <property type="match status" value="1"/>
</dbReference>
<dbReference type="Gene3D" id="1.20.120.920">
    <property type="entry name" value="CRISPR-associated endonuclease Cas1, C-terminal domain"/>
    <property type="match status" value="1"/>
</dbReference>
<dbReference type="Gene3D" id="3.100.10.20">
    <property type="entry name" value="CRISPR-associated endonuclease Cas1, N-terminal domain"/>
    <property type="match status" value="1"/>
</dbReference>
<dbReference type="HAMAP" id="MF_01470">
    <property type="entry name" value="Cas1"/>
    <property type="match status" value="1"/>
</dbReference>
<dbReference type="InterPro" id="IPR050646">
    <property type="entry name" value="Cas1"/>
</dbReference>
<dbReference type="InterPro" id="IPR002729">
    <property type="entry name" value="CRISPR-assoc_Cas1"/>
</dbReference>
<dbReference type="InterPro" id="IPR042206">
    <property type="entry name" value="CRISPR-assoc_Cas1_C"/>
</dbReference>
<dbReference type="InterPro" id="IPR042211">
    <property type="entry name" value="CRISPR-assoc_Cas1_N"/>
</dbReference>
<dbReference type="InterPro" id="IPR019857">
    <property type="entry name" value="CRISPR-assoc_Cas1_YPEST-subtyp"/>
</dbReference>
<dbReference type="NCBIfam" id="TIGR00287">
    <property type="entry name" value="cas1"/>
    <property type="match status" value="1"/>
</dbReference>
<dbReference type="NCBIfam" id="TIGR03637">
    <property type="entry name" value="cas1_YPEST"/>
    <property type="match status" value="1"/>
</dbReference>
<dbReference type="PANTHER" id="PTHR34353:SF3">
    <property type="entry name" value="CRISPR-ASSOCIATED ENDONUCLEASE CAS1"/>
    <property type="match status" value="1"/>
</dbReference>
<dbReference type="PANTHER" id="PTHR34353">
    <property type="entry name" value="CRISPR-ASSOCIATED ENDONUCLEASE CAS1 1"/>
    <property type="match status" value="1"/>
</dbReference>
<dbReference type="Pfam" id="PF01867">
    <property type="entry name" value="Cas_Cas1"/>
    <property type="match status" value="1"/>
</dbReference>
<keyword id="KW-0002">3D-structure</keyword>
<keyword id="KW-0051">Antiviral defense</keyword>
<keyword id="KW-0238">DNA-binding</keyword>
<keyword id="KW-0255">Endonuclease</keyword>
<keyword id="KW-0378">Hydrolase</keyword>
<keyword id="KW-0460">Magnesium</keyword>
<keyword id="KW-0464">Manganese</keyword>
<keyword id="KW-0479">Metal-binding</keyword>
<keyword id="KW-0540">Nuclease</keyword>
<protein>
    <recommendedName>
        <fullName>CRISPR-associated endonuclease Cas1</fullName>
        <ecNumber>3.1.-.-</ecNumber>
    </recommendedName>
</protein>
<sequence length="324" mass="36106">MDDISPSELKTILHSKRANLYYLQHCRVLVNGGRVEYVTDEGRHSHYWNIPIANTTSLLLGTGTSITQAAMRELARAGVLVGFCGGGGTPLFSANEVDVEVSWLTPQSEYRPTEYLQRWVGFWFDEEKRLVAARHFQRARLERIRHSWLEDRVLRDAGFAVDATALAVAVEDSARALEQAPNHEHLLTEEARLSKRLFKLAAQATRYGEFVRAKRGSGGDPANRFLDHGNYLAYGLAATATWVLGIPHGLAVLHGKTRRGGLVFDVADLIKDSLILPQAFLSAMRGDEEQDFRQACLDNLSRAQALDFMIDTLKDVAQRSTVSA</sequence>
<evidence type="ECO:0000255" key="1">
    <source>
        <dbReference type="HAMAP-Rule" id="MF_01470"/>
    </source>
</evidence>
<evidence type="ECO:0000269" key="2">
    <source>
    </source>
</evidence>
<evidence type="ECO:0000305" key="3"/>
<evidence type="ECO:0000305" key="4">
    <source>
    </source>
</evidence>
<evidence type="ECO:0007744" key="5">
    <source>
        <dbReference type="PDB" id="3GOD"/>
    </source>
</evidence>
<evidence type="ECO:0007829" key="6">
    <source>
        <dbReference type="PDB" id="3GOD"/>
    </source>
</evidence>
<evidence type="ECO:0007829" key="7">
    <source>
        <dbReference type="PDB" id="8FLJ"/>
    </source>
</evidence>
<feature type="chain" id="PRO_0000417082" description="CRISPR-associated endonuclease Cas1">
    <location>
        <begin position="1"/>
        <end position="324"/>
    </location>
</feature>
<feature type="binding site" evidence="2 5">
    <location>
        <position position="190"/>
    </location>
    <ligand>
        <name>Mn(2+)</name>
        <dbReference type="ChEBI" id="CHEBI:29035"/>
    </ligand>
</feature>
<feature type="binding site" evidence="2 5">
    <location>
        <position position="254"/>
    </location>
    <ligand>
        <name>Mn(2+)</name>
        <dbReference type="ChEBI" id="CHEBI:29035"/>
    </ligand>
</feature>
<feature type="binding site" evidence="2 5">
    <location>
        <position position="268"/>
    </location>
    <ligand>
        <name>Mn(2+)</name>
        <dbReference type="ChEBI" id="CHEBI:29035"/>
    </ligand>
</feature>
<feature type="mutagenesis site" description="Protein is unstable." evidence="2">
    <original>E</original>
    <variation>A</variation>
    <location>
        <position position="190"/>
    </location>
</feature>
<feature type="mutagenesis site" description="Slight decrease in endonuclease activity." evidence="2">
    <original>N</original>
    <variation>A</variation>
    <location>
        <position position="223"/>
    </location>
</feature>
<feature type="mutagenesis site" description="Protein is unstable." evidence="2">
    <original>H</original>
    <variation>A</variation>
    <location>
        <position position="254"/>
    </location>
</feature>
<feature type="mutagenesis site" description="Considerable decrease in endonuclease activity." evidence="2">
    <original>D</original>
    <variation>A</variation>
    <location>
        <position position="265"/>
    </location>
</feature>
<feature type="mutagenesis site" description="Almost complete loss of endonuclease activity." evidence="2">
    <original>D</original>
    <variation>A</variation>
    <location>
        <position position="268"/>
    </location>
</feature>
<feature type="helix" evidence="6">
    <location>
        <begin position="6"/>
        <end position="15"/>
    </location>
</feature>
<feature type="turn" evidence="7">
    <location>
        <begin position="16"/>
        <end position="18"/>
    </location>
</feature>
<feature type="strand" evidence="6">
    <location>
        <begin position="19"/>
        <end position="23"/>
    </location>
</feature>
<feature type="strand" evidence="6">
    <location>
        <begin position="25"/>
        <end position="31"/>
    </location>
</feature>
<feature type="strand" evidence="6">
    <location>
        <begin position="34"/>
        <end position="41"/>
    </location>
</feature>
<feature type="strand" evidence="6">
    <location>
        <begin position="44"/>
        <end position="49"/>
    </location>
</feature>
<feature type="helix" evidence="6">
    <location>
        <begin position="52"/>
        <end position="54"/>
    </location>
</feature>
<feature type="strand" evidence="6">
    <location>
        <begin position="55"/>
        <end position="60"/>
    </location>
</feature>
<feature type="strand" evidence="6">
    <location>
        <begin position="64"/>
        <end position="67"/>
    </location>
</feature>
<feature type="helix" evidence="6">
    <location>
        <begin position="68"/>
        <end position="76"/>
    </location>
</feature>
<feature type="strand" evidence="6">
    <location>
        <begin position="80"/>
        <end position="84"/>
    </location>
</feature>
<feature type="helix" evidence="7">
    <location>
        <begin position="86"/>
        <end position="88"/>
    </location>
</feature>
<feature type="strand" evidence="6">
    <location>
        <begin position="91"/>
        <end position="94"/>
    </location>
</feature>
<feature type="strand" evidence="6">
    <location>
        <begin position="97"/>
        <end position="109"/>
    </location>
</feature>
<feature type="helix" evidence="6">
    <location>
        <begin position="114"/>
        <end position="123"/>
    </location>
</feature>
<feature type="helix" evidence="6">
    <location>
        <begin position="126"/>
        <end position="150"/>
    </location>
</feature>
<feature type="helix" evidence="6">
    <location>
        <begin position="152"/>
        <end position="156"/>
    </location>
</feature>
<feature type="helix" evidence="6">
    <location>
        <begin position="163"/>
        <end position="178"/>
    </location>
</feature>
<feature type="helix" evidence="6">
    <location>
        <begin position="183"/>
        <end position="204"/>
    </location>
</feature>
<feature type="helix" evidence="6">
    <location>
        <begin position="221"/>
        <end position="243"/>
    </location>
</feature>
<feature type="strand" evidence="6">
    <location>
        <begin position="252"/>
        <end position="254"/>
    </location>
</feature>
<feature type="turn" evidence="6">
    <location>
        <begin position="255"/>
        <end position="257"/>
    </location>
</feature>
<feature type="helix" evidence="6">
    <location>
        <begin position="261"/>
        <end position="267"/>
    </location>
</feature>
<feature type="turn" evidence="6">
    <location>
        <begin position="268"/>
        <end position="274"/>
    </location>
</feature>
<feature type="helix" evidence="6">
    <location>
        <begin position="275"/>
        <end position="285"/>
    </location>
</feature>
<feature type="helix" evidence="6">
    <location>
        <begin position="289"/>
        <end position="302"/>
    </location>
</feature>
<feature type="helix" evidence="6">
    <location>
        <begin position="305"/>
        <end position="319"/>
    </location>
</feature>